<dbReference type="EMBL" id="AY358644">
    <property type="protein sequence ID" value="AAQ89007.1"/>
    <property type="molecule type" value="mRNA"/>
</dbReference>
<dbReference type="EMBL" id="AL390195">
    <property type="status" value="NOT_ANNOTATED_CDS"/>
    <property type="molecule type" value="Genomic_DNA"/>
</dbReference>
<dbReference type="EMBL" id="AL391063">
    <property type="status" value="NOT_ANNOTATED_CDS"/>
    <property type="molecule type" value="Genomic_DNA"/>
</dbReference>
<dbReference type="EMBL" id="CH471122">
    <property type="protein sequence ID" value="EAW56500.1"/>
    <property type="status" value="ALT_SEQ"/>
    <property type="molecule type" value="Genomic_DNA"/>
</dbReference>
<dbReference type="EMBL" id="BC041707">
    <property type="protein sequence ID" value="AAH41707.1"/>
    <property type="status" value="ALT_INIT"/>
    <property type="molecule type" value="mRNA"/>
</dbReference>
<dbReference type="EMBL" id="BC064411">
    <property type="protein sequence ID" value="AAH64411.1"/>
    <property type="status" value="ALT_INIT"/>
    <property type="molecule type" value="mRNA"/>
</dbReference>
<dbReference type="CCDS" id="CCDS41369.1">
    <molecule id="P0DMS9-1"/>
</dbReference>
<dbReference type="CCDS" id="CCDS838.1">
    <molecule id="P0DMS9-2"/>
</dbReference>
<dbReference type="RefSeq" id="NP_001075445.1">
    <molecule id="P0DMS9-1"/>
    <property type="nucleotide sequence ID" value="NM_001081976.3"/>
</dbReference>
<dbReference type="RefSeq" id="NP_001289609.1">
    <property type="nucleotide sequence ID" value="NM_001302680.1"/>
</dbReference>
<dbReference type="RefSeq" id="NP_065734.5">
    <molecule id="P0DMS9-2"/>
    <property type="nucleotide sequence ID" value="NM_020683.6"/>
</dbReference>
<dbReference type="SMR" id="P0DMS9"/>
<dbReference type="FunCoup" id="P0DMS9">
    <property type="interactions" value="428"/>
</dbReference>
<dbReference type="STRING" id="9606.ENSP00000358730"/>
<dbReference type="BindingDB" id="P0DMS9"/>
<dbReference type="ChEMBL" id="CHEMBL3712907"/>
<dbReference type="DrugCentral" id="P0DMS9"/>
<dbReference type="GlyCosmos" id="P0DMS9">
    <property type="glycosylation" value="1 site, No reported glycans"/>
</dbReference>
<dbReference type="GlyGen" id="P0DMS9">
    <property type="glycosylation" value="1 site"/>
</dbReference>
<dbReference type="iPTMnet" id="P0DMS9"/>
<dbReference type="PhosphoSitePlus" id="P0DMS9"/>
<dbReference type="BioMuta" id="TMIGD3"/>
<dbReference type="DMDM" id="380876892"/>
<dbReference type="MassIVE" id="P0DMS9"/>
<dbReference type="PaxDb" id="9606-ENSP00000358730"/>
<dbReference type="PeptideAtlas" id="P0DMS9"/>
<dbReference type="Antibodypedia" id="20120">
    <property type="antibodies" value="78 antibodies from 16 providers"/>
</dbReference>
<dbReference type="DNASU" id="140"/>
<dbReference type="DNASU" id="57413"/>
<dbReference type="Ensembl" id="ENST00000369716.9">
    <molecule id="P0DMS9-2"/>
    <property type="protein sequence ID" value="ENSP00000358730.4"/>
    <property type="gene ID" value="ENSG00000121933.19"/>
</dbReference>
<dbReference type="Ensembl" id="ENST00000369717.8">
    <molecule id="P0DMS9-1"/>
    <property type="protein sequence ID" value="ENSP00000358731.4"/>
    <property type="gene ID" value="ENSG00000121933.19"/>
</dbReference>
<dbReference type="GeneID" id="57413"/>
<dbReference type="KEGG" id="hsa:57413"/>
<dbReference type="MANE-Select" id="ENST00000369716.9">
    <molecule id="P0DMS9-2"/>
    <property type="protein sequence ID" value="ENSP00000358730.4"/>
    <property type="RefSeq nucleotide sequence ID" value="NM_020683.7"/>
    <property type="RefSeq protein sequence ID" value="NP_065734.5"/>
</dbReference>
<dbReference type="AGR" id="HGNC:51375"/>
<dbReference type="CTD" id="57413"/>
<dbReference type="DisGeNET" id="57413"/>
<dbReference type="GeneCards" id="TMIGD3"/>
<dbReference type="HGNC" id="HGNC:51375">
    <property type="gene designation" value="TMIGD3"/>
</dbReference>
<dbReference type="HPA" id="ENSG00000121933">
    <property type="expression patterns" value="Tissue enriched (testis)"/>
</dbReference>
<dbReference type="neXtProt" id="NX_P0DMS9"/>
<dbReference type="OpenTargets" id="ENSG00000121933"/>
<dbReference type="PharmGKB" id="PA24589"/>
<dbReference type="VEuPathDB" id="HostDB:ENSG00000121933"/>
<dbReference type="eggNOG" id="KOG3656">
    <property type="taxonomic scope" value="Eukaryota"/>
</dbReference>
<dbReference type="GeneTree" id="ENSGT00930000151073"/>
<dbReference type="HOGENOM" id="CLU_091386_0_0_1"/>
<dbReference type="InParanoid" id="P0DMS9"/>
<dbReference type="OMA" id="GLARDFW"/>
<dbReference type="OrthoDB" id="284782at2759"/>
<dbReference type="PAN-GO" id="P0DMS9">
    <property type="GO annotations" value="2 GO annotations based on evolutionary models"/>
</dbReference>
<dbReference type="PathwayCommons" id="P0DMS9"/>
<dbReference type="BioGRID-ORCS" id="57413">
    <property type="hits" value="6 hits in 134 CRISPR screens"/>
</dbReference>
<dbReference type="ChiTaRS" id="TMIGD3">
    <property type="organism name" value="human"/>
</dbReference>
<dbReference type="GenomeRNAi" id="57413"/>
<dbReference type="Pharos" id="P0DMS9">
    <property type="development level" value="Tchem"/>
</dbReference>
<dbReference type="PRO" id="PR:P0DMS9"/>
<dbReference type="Proteomes" id="UP000005640">
    <property type="component" value="Chromosome 1"/>
</dbReference>
<dbReference type="RNAct" id="P0DMS9">
    <property type="molecule type" value="protein"/>
</dbReference>
<dbReference type="Bgee" id="ENSG00000121933">
    <property type="expression patterns" value="Expressed in left testis and 116 other cell types or tissues"/>
</dbReference>
<dbReference type="ExpressionAtlas" id="P0DMS9">
    <property type="expression patterns" value="baseline and differential"/>
</dbReference>
<dbReference type="GO" id="GO:0016020">
    <property type="term" value="C:membrane"/>
    <property type="evidence" value="ECO:0000314"/>
    <property type="project" value="UniProtKB"/>
</dbReference>
<dbReference type="GO" id="GO:0005886">
    <property type="term" value="C:plasma membrane"/>
    <property type="evidence" value="ECO:0000318"/>
    <property type="project" value="GO_Central"/>
</dbReference>
<dbReference type="GO" id="GO:0004888">
    <property type="term" value="F:transmembrane signaling receptor activity"/>
    <property type="evidence" value="ECO:0000318"/>
    <property type="project" value="GO_Central"/>
</dbReference>
<dbReference type="GO" id="GO:0007190">
    <property type="term" value="P:activation of adenylate cyclase activity"/>
    <property type="evidence" value="ECO:0000304"/>
    <property type="project" value="ProtInc"/>
</dbReference>
<dbReference type="GO" id="GO:0002757">
    <property type="term" value="P:immune response-activating signaling pathway"/>
    <property type="evidence" value="ECO:0000318"/>
    <property type="project" value="GO_Central"/>
</dbReference>
<dbReference type="GO" id="GO:0006954">
    <property type="term" value="P:inflammatory response"/>
    <property type="evidence" value="ECO:0000304"/>
    <property type="project" value="ProtInc"/>
</dbReference>
<dbReference type="GO" id="GO:0030336">
    <property type="term" value="P:negative regulation of cell migration"/>
    <property type="evidence" value="ECO:0000315"/>
    <property type="project" value="UniProtKB"/>
</dbReference>
<dbReference type="GO" id="GO:0008285">
    <property type="term" value="P:negative regulation of cell population proliferation"/>
    <property type="evidence" value="ECO:0000315"/>
    <property type="project" value="UniProtKB"/>
</dbReference>
<dbReference type="GO" id="GO:0032088">
    <property type="term" value="P:negative regulation of NF-kappaB transcription factor activity"/>
    <property type="evidence" value="ECO:0000315"/>
    <property type="project" value="UniProtKB"/>
</dbReference>
<dbReference type="GO" id="GO:0008016">
    <property type="term" value="P:regulation of heart contraction"/>
    <property type="evidence" value="ECO:0000304"/>
    <property type="project" value="ProtInc"/>
</dbReference>
<dbReference type="GO" id="GO:0009611">
    <property type="term" value="P:response to wounding"/>
    <property type="evidence" value="ECO:0000304"/>
    <property type="project" value="ProtInc"/>
</dbReference>
<dbReference type="GO" id="GO:0007165">
    <property type="term" value="P:signal transduction"/>
    <property type="evidence" value="ECO:0000304"/>
    <property type="project" value="ProtInc"/>
</dbReference>
<dbReference type="FunFam" id="2.60.40.10:FF:002004">
    <property type="entry name" value="Transmembrane and immunoglobulin domain containing 3"/>
    <property type="match status" value="1"/>
</dbReference>
<dbReference type="Gene3D" id="2.60.40.10">
    <property type="entry name" value="Immunoglobulins"/>
    <property type="match status" value="1"/>
</dbReference>
<dbReference type="InterPro" id="IPR050671">
    <property type="entry name" value="CD300_family_receptors"/>
</dbReference>
<dbReference type="InterPro" id="IPR036179">
    <property type="entry name" value="Ig-like_dom_sf"/>
</dbReference>
<dbReference type="InterPro" id="IPR013783">
    <property type="entry name" value="Ig-like_fold"/>
</dbReference>
<dbReference type="PANTHER" id="PTHR11860">
    <property type="entry name" value="POLYMERIC-IMMUNOGLOBULIN RECEPTOR"/>
    <property type="match status" value="1"/>
</dbReference>
<dbReference type="PANTHER" id="PTHR11860:SF4">
    <property type="entry name" value="TRANSMEMBRANE DOMAIN-CONTAINING PROTEIN TMIGD3"/>
    <property type="match status" value="1"/>
</dbReference>
<dbReference type="SUPFAM" id="SSF48726">
    <property type="entry name" value="Immunoglobulin"/>
    <property type="match status" value="1"/>
</dbReference>
<sequence length="266" mass="30327">MEGSPAGPIEQKEARWESSWEEQPDWTLGCLSPESQFRIPGLPGCILSFQLKVCFLPVMWLFILLSLALISDAMVMDEKVKRSFVLDTASAICNYNAHYKNHPKYWCRGYFRDYCNIIAFSPNSTNHVALRDTGNQLIVTMSCLTKEDTGWYWCGIQRDFARDDMDFTELIVTDDKGTLANDFWSGKDLSGNKTRSCKAPKVVRKADRSRTSILIICILITGLGIISVISHLTKRRRSQRNRRVGNTLKPFSRVLTPKEMAPTEQM</sequence>
<reference key="1">
    <citation type="journal article" date="2003" name="Genome Res.">
        <title>The secreted protein discovery initiative (SPDI), a large-scale effort to identify novel human secreted and transmembrane proteins: a bioinformatics assessment.</title>
        <authorList>
            <person name="Clark H.F."/>
            <person name="Gurney A.L."/>
            <person name="Abaya E."/>
            <person name="Baker K."/>
            <person name="Baldwin D.T."/>
            <person name="Brush J."/>
            <person name="Chen J."/>
            <person name="Chow B."/>
            <person name="Chui C."/>
            <person name="Crowley C."/>
            <person name="Currell B."/>
            <person name="Deuel B."/>
            <person name="Dowd P."/>
            <person name="Eaton D."/>
            <person name="Foster J.S."/>
            <person name="Grimaldi C."/>
            <person name="Gu Q."/>
            <person name="Hass P.E."/>
            <person name="Heldens S."/>
            <person name="Huang A."/>
            <person name="Kim H.S."/>
            <person name="Klimowski L."/>
            <person name="Jin Y."/>
            <person name="Johnson S."/>
            <person name="Lee J."/>
            <person name="Lewis L."/>
            <person name="Liao D."/>
            <person name="Mark M.R."/>
            <person name="Robbie E."/>
            <person name="Sanchez C."/>
            <person name="Schoenfeld J."/>
            <person name="Seshagiri S."/>
            <person name="Simmons L."/>
            <person name="Singh J."/>
            <person name="Smith V."/>
            <person name="Stinson J."/>
            <person name="Vagts A."/>
            <person name="Vandlen R.L."/>
            <person name="Watanabe C."/>
            <person name="Wieand D."/>
            <person name="Woods K."/>
            <person name="Xie M.-H."/>
            <person name="Yansura D.G."/>
            <person name="Yi S."/>
            <person name="Yu G."/>
            <person name="Yuan J."/>
            <person name="Zhang M."/>
            <person name="Zhang Z."/>
            <person name="Goddard A.D."/>
            <person name="Wood W.I."/>
            <person name="Godowski P.J."/>
            <person name="Gray A.M."/>
        </authorList>
    </citation>
    <scope>NUCLEOTIDE SEQUENCE [LARGE SCALE MRNA] (ISOFORM 2)</scope>
</reference>
<reference key="2">
    <citation type="journal article" date="2006" name="Nature">
        <title>The DNA sequence and biological annotation of human chromosome 1.</title>
        <authorList>
            <person name="Gregory S.G."/>
            <person name="Barlow K.F."/>
            <person name="McLay K.E."/>
            <person name="Kaul R."/>
            <person name="Swarbreck D."/>
            <person name="Dunham A."/>
            <person name="Scott C.E."/>
            <person name="Howe K.L."/>
            <person name="Woodfine K."/>
            <person name="Spencer C.C.A."/>
            <person name="Jones M.C."/>
            <person name="Gillson C."/>
            <person name="Searle S."/>
            <person name="Zhou Y."/>
            <person name="Kokocinski F."/>
            <person name="McDonald L."/>
            <person name="Evans R."/>
            <person name="Phillips K."/>
            <person name="Atkinson A."/>
            <person name="Cooper R."/>
            <person name="Jones C."/>
            <person name="Hall R.E."/>
            <person name="Andrews T.D."/>
            <person name="Lloyd C."/>
            <person name="Ainscough R."/>
            <person name="Almeida J.P."/>
            <person name="Ambrose K.D."/>
            <person name="Anderson F."/>
            <person name="Andrew R.W."/>
            <person name="Ashwell R.I.S."/>
            <person name="Aubin K."/>
            <person name="Babbage A.K."/>
            <person name="Bagguley C.L."/>
            <person name="Bailey J."/>
            <person name="Beasley H."/>
            <person name="Bethel G."/>
            <person name="Bird C.P."/>
            <person name="Bray-Allen S."/>
            <person name="Brown J.Y."/>
            <person name="Brown A.J."/>
            <person name="Buckley D."/>
            <person name="Burton J."/>
            <person name="Bye J."/>
            <person name="Carder C."/>
            <person name="Chapman J.C."/>
            <person name="Clark S.Y."/>
            <person name="Clarke G."/>
            <person name="Clee C."/>
            <person name="Cobley V."/>
            <person name="Collier R.E."/>
            <person name="Corby N."/>
            <person name="Coville G.J."/>
            <person name="Davies J."/>
            <person name="Deadman R."/>
            <person name="Dunn M."/>
            <person name="Earthrowl M."/>
            <person name="Ellington A.G."/>
            <person name="Errington H."/>
            <person name="Frankish A."/>
            <person name="Frankland J."/>
            <person name="French L."/>
            <person name="Garner P."/>
            <person name="Garnett J."/>
            <person name="Gay L."/>
            <person name="Ghori M.R.J."/>
            <person name="Gibson R."/>
            <person name="Gilby L.M."/>
            <person name="Gillett W."/>
            <person name="Glithero R.J."/>
            <person name="Grafham D.V."/>
            <person name="Griffiths C."/>
            <person name="Griffiths-Jones S."/>
            <person name="Grocock R."/>
            <person name="Hammond S."/>
            <person name="Harrison E.S.I."/>
            <person name="Hart E."/>
            <person name="Haugen E."/>
            <person name="Heath P.D."/>
            <person name="Holmes S."/>
            <person name="Holt K."/>
            <person name="Howden P.J."/>
            <person name="Hunt A.R."/>
            <person name="Hunt S.E."/>
            <person name="Hunter G."/>
            <person name="Isherwood J."/>
            <person name="James R."/>
            <person name="Johnson C."/>
            <person name="Johnson D."/>
            <person name="Joy A."/>
            <person name="Kay M."/>
            <person name="Kershaw J.K."/>
            <person name="Kibukawa M."/>
            <person name="Kimberley A.M."/>
            <person name="King A."/>
            <person name="Knights A.J."/>
            <person name="Lad H."/>
            <person name="Laird G."/>
            <person name="Lawlor S."/>
            <person name="Leongamornlert D.A."/>
            <person name="Lloyd D.M."/>
            <person name="Loveland J."/>
            <person name="Lovell J."/>
            <person name="Lush M.J."/>
            <person name="Lyne R."/>
            <person name="Martin S."/>
            <person name="Mashreghi-Mohammadi M."/>
            <person name="Matthews L."/>
            <person name="Matthews N.S.W."/>
            <person name="McLaren S."/>
            <person name="Milne S."/>
            <person name="Mistry S."/>
            <person name="Moore M.J.F."/>
            <person name="Nickerson T."/>
            <person name="O'Dell C.N."/>
            <person name="Oliver K."/>
            <person name="Palmeiri A."/>
            <person name="Palmer S.A."/>
            <person name="Parker A."/>
            <person name="Patel D."/>
            <person name="Pearce A.V."/>
            <person name="Peck A.I."/>
            <person name="Pelan S."/>
            <person name="Phelps K."/>
            <person name="Phillimore B.J."/>
            <person name="Plumb R."/>
            <person name="Rajan J."/>
            <person name="Raymond C."/>
            <person name="Rouse G."/>
            <person name="Saenphimmachak C."/>
            <person name="Sehra H.K."/>
            <person name="Sheridan E."/>
            <person name="Shownkeen R."/>
            <person name="Sims S."/>
            <person name="Skuce C.D."/>
            <person name="Smith M."/>
            <person name="Steward C."/>
            <person name="Subramanian S."/>
            <person name="Sycamore N."/>
            <person name="Tracey A."/>
            <person name="Tromans A."/>
            <person name="Van Helmond Z."/>
            <person name="Wall M."/>
            <person name="Wallis J.M."/>
            <person name="White S."/>
            <person name="Whitehead S.L."/>
            <person name="Wilkinson J.E."/>
            <person name="Willey D.L."/>
            <person name="Williams H."/>
            <person name="Wilming L."/>
            <person name="Wray P.W."/>
            <person name="Wu Z."/>
            <person name="Coulson A."/>
            <person name="Vaudin M."/>
            <person name="Sulston J.E."/>
            <person name="Durbin R.M."/>
            <person name="Hubbard T."/>
            <person name="Wooster R."/>
            <person name="Dunham I."/>
            <person name="Carter N.P."/>
            <person name="McVean G."/>
            <person name="Ross M.T."/>
            <person name="Harrow J."/>
            <person name="Olson M.V."/>
            <person name="Beck S."/>
            <person name="Rogers J."/>
            <person name="Bentley D.R."/>
        </authorList>
    </citation>
    <scope>NUCLEOTIDE SEQUENCE [LARGE SCALE GENOMIC DNA]</scope>
</reference>
<reference key="3">
    <citation type="submission" date="2005-07" db="EMBL/GenBank/DDBJ databases">
        <authorList>
            <person name="Mural R.J."/>
            <person name="Istrail S."/>
            <person name="Sutton G.G."/>
            <person name="Florea L."/>
            <person name="Halpern A.L."/>
            <person name="Mobarry C.M."/>
            <person name="Lippert R."/>
            <person name="Walenz B."/>
            <person name="Shatkay H."/>
            <person name="Dew I."/>
            <person name="Miller J.R."/>
            <person name="Flanigan M.J."/>
            <person name="Edwards N.J."/>
            <person name="Bolanos R."/>
            <person name="Fasulo D."/>
            <person name="Halldorsson B.V."/>
            <person name="Hannenhalli S."/>
            <person name="Turner R."/>
            <person name="Yooseph S."/>
            <person name="Lu F."/>
            <person name="Nusskern D.R."/>
            <person name="Shue B.C."/>
            <person name="Zheng X.H."/>
            <person name="Zhong F."/>
            <person name="Delcher A.L."/>
            <person name="Huson D.H."/>
            <person name="Kravitz S.A."/>
            <person name="Mouchard L."/>
            <person name="Reinert K."/>
            <person name="Remington K.A."/>
            <person name="Clark A.G."/>
            <person name="Waterman M.S."/>
            <person name="Eichler E.E."/>
            <person name="Adams M.D."/>
            <person name="Hunkapiller M.W."/>
            <person name="Myers E.W."/>
            <person name="Venter J.C."/>
        </authorList>
    </citation>
    <scope>NUCLEOTIDE SEQUENCE [LARGE SCALE GENOMIC DNA]</scope>
</reference>
<reference key="4">
    <citation type="journal article" date="2004" name="Genome Res.">
        <title>The status, quality, and expansion of the NIH full-length cDNA project: the Mammalian Gene Collection (MGC).</title>
        <authorList>
            <consortium name="The MGC Project Team"/>
        </authorList>
    </citation>
    <scope>NUCLEOTIDE SEQUENCE [LARGE SCALE MRNA] OF 5-266 (ISOFORM 1)</scope>
    <source>
        <tissue>Brain</tissue>
    </source>
</reference>
<reference key="5">
    <citation type="journal article" date="2016" name="Nat. Commun.">
        <title>Genome-wide RNAi screening identifies TMIGD3 isoform1 as a suppressor of NF-kappaB and osteosarcoma progression.</title>
        <authorList>
            <person name="Iyer S.V."/>
            <person name="Ranjan A."/>
            <person name="Elias H.K."/>
            <person name="Parrales A."/>
            <person name="Sasaki H."/>
            <person name="Roy B.C."/>
            <person name="Umar S."/>
            <person name="Tawfik O.W."/>
            <person name="Iwakuma T."/>
        </authorList>
    </citation>
    <scope>FUNCTION (ISOFORM 1)</scope>
    <scope>SUBCELLULAR LOCATION</scope>
    <scope>TISSUE SPECIFICITY</scope>
    <scope>ALTERNATIVE SPLICING</scope>
</reference>
<protein>
    <recommendedName>
        <fullName evidence="5">Transmembrane domain-containing protein TMIGD3</fullName>
    </recommendedName>
</protein>
<evidence type="ECO:0000255" key="1"/>
<evidence type="ECO:0000256" key="2">
    <source>
        <dbReference type="SAM" id="MobiDB-lite"/>
    </source>
</evidence>
<evidence type="ECO:0000269" key="3">
    <source>
    </source>
</evidence>
<evidence type="ECO:0000303" key="4">
    <source>
    </source>
</evidence>
<evidence type="ECO:0000305" key="5"/>
<evidence type="ECO:0000312" key="6">
    <source>
        <dbReference type="HGNC" id="HGNC:51375"/>
    </source>
</evidence>
<feature type="chain" id="PRO_0000416044" description="Transmembrane domain-containing protein TMIGD3">
    <location>
        <begin position="1"/>
        <end position="266"/>
    </location>
</feature>
<feature type="transmembrane region" description="Helical" evidence="1">
    <location>
        <begin position="55"/>
        <end position="75"/>
    </location>
</feature>
<feature type="transmembrane region" description="Helical" evidence="1">
    <location>
        <begin position="213"/>
        <end position="233"/>
    </location>
</feature>
<feature type="region of interest" description="Disordered" evidence="2">
    <location>
        <begin position="1"/>
        <end position="20"/>
    </location>
</feature>
<feature type="glycosylation site" description="N-linked (GlcNAc...) asparagine" evidence="1">
    <location>
        <position position="192"/>
    </location>
</feature>
<feature type="splice variant" id="VSP_057521" description="In isoform 1.">
    <original>MEGSPAGPIEQKEARWESSWEEQPDWTLGCLSPESQ</original>
    <variation>MPNNSTALSLANVTYITMEIFIGLCAIVGNVLVICVVKLNPSLQTTTFYFIVSLALADIAVGVLVMPLAIVVSLGITIHFYSCLFMTCLLLIFTHASIMSLLAIAVDRYLRVKLTVR</variation>
    <location>
        <begin position="1"/>
        <end position="36"/>
    </location>
</feature>
<name>TMIG3_HUMAN</name>
<organism>
    <name type="scientific">Homo sapiens</name>
    <name type="common">Human</name>
    <dbReference type="NCBI Taxonomy" id="9606"/>
    <lineage>
        <taxon>Eukaryota</taxon>
        <taxon>Metazoa</taxon>
        <taxon>Chordata</taxon>
        <taxon>Craniata</taxon>
        <taxon>Vertebrata</taxon>
        <taxon>Euteleostomi</taxon>
        <taxon>Mammalia</taxon>
        <taxon>Eutheria</taxon>
        <taxon>Euarchontoglires</taxon>
        <taxon>Primates</taxon>
        <taxon>Haplorrhini</taxon>
        <taxon>Catarrhini</taxon>
        <taxon>Hominidae</taxon>
        <taxon>Homo</taxon>
    </lineage>
</organism>
<proteinExistence type="evidence at protein level"/>
<keyword id="KW-0025">Alternative splicing</keyword>
<keyword id="KW-0325">Glycoprotein</keyword>
<keyword id="KW-0472">Membrane</keyword>
<keyword id="KW-1267">Proteomics identification</keyword>
<keyword id="KW-1185">Reference proteome</keyword>
<keyword id="KW-0812">Transmembrane</keyword>
<keyword id="KW-1133">Transmembrane helix</keyword>
<comment type="function">
    <molecule>Isoform 1</molecule>
    <text evidence="3">Plays a suppressive role in osteosarcoma malignancy by inhibiting NF-kappa-B activity (PubMed:27886186).</text>
</comment>
<comment type="subcellular location">
    <subcellularLocation>
        <location evidence="3">Membrane</location>
        <topology evidence="1">Multi-pass membrane protein</topology>
    </subcellularLocation>
</comment>
<comment type="alternative products">
    <event type="alternative splicing"/>
    <isoform>
        <id>P0DMS9-1</id>
        <name>3</name>
        <name evidence="4">TMIGD3 i3</name>
        <name evidence="4">A3AR i3</name>
        <sequence type="displayed"/>
    </isoform>
    <isoform>
        <id>P0DMS9-2</id>
        <name>1</name>
        <name evidence="4">TMIGD3 i1</name>
        <name evidence="4">A3AR i1</name>
        <sequence type="described" ref="VSP_057521"/>
    </isoform>
    <isoform>
        <id>P0DMS8-1</id>
        <name>2</name>
        <name evidence="4">A3AR i2</name>
        <name evidence="4">A3AR</name>
        <sequence type="external"/>
    </isoform>
</comment>
<comment type="tissue specificity">
    <text evidence="3">Expressed in the lung and bone. Expressed at lower levels in osteosarcoma tissues (at protein level).</text>
</comment>
<comment type="miscellaneous">
    <molecule>Isoform 1</molecule>
    <text evidence="4">The first exon of TMIGD3 isoform 1 (i1) is shared with the first exon of ADORA3 isoform 2 (A3AR i2, commonly known as A3AR), resulting in a fusion protein.</text>
</comment>
<comment type="sequence caution" evidence="5">
    <conflict type="erroneous initiation">
        <sequence resource="EMBL-CDS" id="AAH41707"/>
    </conflict>
    <text>Truncated N-terminus.</text>
</comment>
<comment type="sequence caution" evidence="5">
    <conflict type="erroneous initiation">
        <sequence resource="EMBL-CDS" id="AAH64411"/>
    </conflict>
    <text>Truncated N-terminus.</text>
</comment>
<comment type="sequence caution" evidence="5">
    <conflict type="erroneous gene model prediction">
        <sequence resource="EMBL-CDS" id="EAW56500"/>
    </conflict>
</comment>
<gene>
    <name evidence="6" type="primary">TMIGD3</name>
    <name type="ORF">UNQ1931/PRO4406</name>
</gene>
<accession>P0DMS9</accession>
<accession>A2A3P4</accession>
<accession>P33765</accession>
<accession>Q5QNY7</accession>
<accession>Q6P2N6</accession>
<accession>Q6UWU0</accession>
<accession>Q9BYZ1</accession>